<evidence type="ECO:0000255" key="1">
    <source>
        <dbReference type="PROSITE-ProRule" id="PRU00628"/>
    </source>
</evidence>
<evidence type="ECO:0000255" key="2">
    <source>
        <dbReference type="PROSITE-ProRule" id="PRU00648"/>
    </source>
</evidence>
<evidence type="ECO:0000269" key="3">
    <source>
    </source>
</evidence>
<evidence type="ECO:0000303" key="4">
    <source>
    </source>
</evidence>
<evidence type="ECO:0000305" key="5"/>
<evidence type="ECO:0000305" key="6">
    <source>
    </source>
</evidence>
<evidence type="ECO:0000312" key="7">
    <source>
        <dbReference type="EMBL" id="GCA58264.1"/>
    </source>
</evidence>
<dbReference type="EC" id="1.-.-.-" evidence="6"/>
<dbReference type="EMBL" id="BDJA01000015">
    <property type="protein sequence ID" value="GCA58264.1"/>
    <property type="molecule type" value="Genomic_DNA"/>
</dbReference>
<dbReference type="RefSeq" id="WP_218567521.1">
    <property type="nucleotide sequence ID" value="NZ_BDJA01000015.1"/>
</dbReference>
<dbReference type="SMR" id="A0A391NZA8"/>
<dbReference type="Proteomes" id="UP000268673">
    <property type="component" value="Unassembled WGS sequence"/>
</dbReference>
<dbReference type="GO" id="GO:0042597">
    <property type="term" value="C:periplasmic space"/>
    <property type="evidence" value="ECO:0007669"/>
    <property type="project" value="UniProtKB-SubCell"/>
</dbReference>
<dbReference type="GO" id="GO:0051537">
    <property type="term" value="F:2 iron, 2 sulfur cluster binding"/>
    <property type="evidence" value="ECO:0007669"/>
    <property type="project" value="UniProtKB-KW"/>
</dbReference>
<dbReference type="GO" id="GO:0046872">
    <property type="term" value="F:metal ion binding"/>
    <property type="evidence" value="ECO:0007669"/>
    <property type="project" value="UniProtKB-KW"/>
</dbReference>
<dbReference type="GO" id="GO:0016491">
    <property type="term" value="F:oxidoreductase activity"/>
    <property type="evidence" value="ECO:0007669"/>
    <property type="project" value="UniProtKB-KW"/>
</dbReference>
<dbReference type="Gene3D" id="2.102.10.10">
    <property type="entry name" value="Rieske [2Fe-2S] iron-sulphur domain"/>
    <property type="match status" value="1"/>
</dbReference>
<dbReference type="InterPro" id="IPR014067">
    <property type="entry name" value="AioB/IdrB_ssu"/>
</dbReference>
<dbReference type="InterPro" id="IPR017941">
    <property type="entry name" value="Rieske_2Fe-2S"/>
</dbReference>
<dbReference type="InterPro" id="IPR036922">
    <property type="entry name" value="Rieske_2Fe-2S_sf"/>
</dbReference>
<dbReference type="InterPro" id="IPR006311">
    <property type="entry name" value="TAT_signal"/>
</dbReference>
<dbReference type="NCBIfam" id="TIGR02694">
    <property type="entry name" value="arsenite_ox_S"/>
    <property type="match status" value="1"/>
</dbReference>
<dbReference type="Pfam" id="PF00355">
    <property type="entry name" value="Rieske"/>
    <property type="match status" value="1"/>
</dbReference>
<dbReference type="SUPFAM" id="SSF50022">
    <property type="entry name" value="ISP domain"/>
    <property type="match status" value="1"/>
</dbReference>
<dbReference type="PROSITE" id="PS51296">
    <property type="entry name" value="RIESKE"/>
    <property type="match status" value="1"/>
</dbReference>
<dbReference type="PROSITE" id="PS51318">
    <property type="entry name" value="TAT"/>
    <property type="match status" value="1"/>
</dbReference>
<comment type="function">
    <text evidence="3">Involved in iodate respiration (PubMed:32190953). Probably catalyzes the reduction of iodate (IO(3)(-)) to hypoiodous acid (HIO) and H(2)O(2), using a reduced cytochrome c as the electron donor (PubMed:32190953).</text>
</comment>
<comment type="cofactor">
    <cofactor evidence="1">
        <name>[2Fe-2S] cluster</name>
        <dbReference type="ChEBI" id="CHEBI:190135"/>
    </cofactor>
    <text evidence="1">Binds 1 [2Fe-2S] cluster per subunit.</text>
</comment>
<comment type="subunit">
    <text evidence="3">The iodate reductase (Idr) complex is composed of a molybdopterin-dependent iodate reductase (IdrA and IdrB subunits) and two associated peroxidases (IdrP1 and IdrP2).</text>
</comment>
<comment type="subcellular location">
    <subcellularLocation>
        <location evidence="3">Periplasm</location>
    </subcellularLocation>
</comment>
<comment type="induction">
    <text evidence="3">Specifically expressed under iodate-respiring conditions.</text>
</comment>
<comment type="PTM">
    <text evidence="2">Predicted to be exported by the Tat system. The position of the signal peptide cleavage has not been experimentally proven.</text>
</comment>
<comment type="similarity">
    <text evidence="5">Belongs to the AOX family.</text>
</comment>
<name>IDRB_PSEXS</name>
<gene>
    <name evidence="4" type="primary">idrB</name>
    <name evidence="7" type="ORF">PSCT_04484</name>
</gene>
<reference key="1">
    <citation type="submission" date="2016-11" db="EMBL/GenBank/DDBJ databases">
        <title>Genome sequencing of bacteria contributing to the geochemical cycling of arsenic, bromine, and iodine.</title>
        <authorList>
            <person name="Harada M."/>
            <person name="Ito K."/>
            <person name="Nakajima N."/>
            <person name="Yamamura S."/>
            <person name="Tomita M."/>
            <person name="Suzuki H."/>
            <person name="Amachi S."/>
        </authorList>
    </citation>
    <scope>NUCLEOTIDE SEQUENCE [LARGE SCALE GENOMIC DNA]</scope>
    <source>
        <strain>SCT</strain>
    </source>
</reference>
<reference key="2">
    <citation type="journal article" date="2020" name="Environ. Microbiol.">
        <title>A novel dimethylsulfoxide reductase family of molybdenum enzyme, Idr, is involved in iodate respiration by Pseudomonas sp. SCT.</title>
        <authorList>
            <person name="Yamazaki C."/>
            <person name="Kashiwa S."/>
            <person name="Horiuchi A."/>
            <person name="Kasahara Y."/>
            <person name="Yamamura S."/>
            <person name="Amachi S."/>
        </authorList>
    </citation>
    <scope>IDENTIFICATION BY MASS SPECTROMETRY</scope>
    <scope>FUNCTION</scope>
    <scope>SUBUNIT</scope>
    <scope>SUBCELLULAR LOCATION</scope>
    <scope>INDUCTION</scope>
    <source>
        <strain>SCT</strain>
    </source>
</reference>
<sequence>MSENIIPVRAVPAHDHEHDGERACMSRRRFLLFGGTSVALLSIASLPGVAQVMQALKADYARQRIGSLSALKTGEPLDFNYPYPDVRNILVKLGVAAGGGIGADKDIVAFNQQCTHMGGPLDGTYKAEHQILGPCPLHLTTFDLTRHGMVASGHATESLPQIVLEVQGDDIYAIGVLGLVYGFDSMNDVQPA</sequence>
<protein>
    <recommendedName>
        <fullName evidence="5">Iodate reductase subunit IdrB</fullName>
        <ecNumber evidence="6">1.-.-.-</ecNumber>
    </recommendedName>
</protein>
<accession>A0A391NZA8</accession>
<feature type="signal peptide" description="Tat-type signal" evidence="2">
    <location>
        <begin position="1"/>
        <end position="52"/>
    </location>
</feature>
<feature type="chain" id="PRO_0000455407" description="Iodate reductase subunit IdrB" evidence="2">
    <location>
        <begin position="53"/>
        <end position="192"/>
    </location>
</feature>
<feature type="domain" description="Rieske" evidence="1">
    <location>
        <begin position="102"/>
        <end position="173"/>
    </location>
</feature>
<feature type="binding site" evidence="1">
    <location>
        <position position="114"/>
    </location>
    <ligand>
        <name>[2Fe-2S] cluster</name>
        <dbReference type="ChEBI" id="CHEBI:190135"/>
    </ligand>
</feature>
<feature type="binding site" evidence="1">
    <location>
        <position position="116"/>
    </location>
    <ligand>
        <name>[2Fe-2S] cluster</name>
        <dbReference type="ChEBI" id="CHEBI:190135"/>
    </ligand>
</feature>
<feature type="binding site" evidence="1">
    <location>
        <position position="135"/>
    </location>
    <ligand>
        <name>[2Fe-2S] cluster</name>
        <dbReference type="ChEBI" id="CHEBI:190135"/>
    </ligand>
</feature>
<feature type="binding site" evidence="1">
    <location>
        <position position="138"/>
    </location>
    <ligand>
        <name>[2Fe-2S] cluster</name>
        <dbReference type="ChEBI" id="CHEBI:190135"/>
    </ligand>
</feature>
<organism>
    <name type="scientific">Pseudomonas sp. (strain SCT)</name>
    <dbReference type="NCBI Taxonomy" id="412955"/>
    <lineage>
        <taxon>Bacteria</taxon>
        <taxon>Pseudomonadati</taxon>
        <taxon>Pseudomonadota</taxon>
        <taxon>Gammaproteobacteria</taxon>
        <taxon>Pseudomonadales</taxon>
        <taxon>Pseudomonadaceae</taxon>
        <taxon>Pseudomonas</taxon>
    </lineage>
</organism>
<keyword id="KW-0001">2Fe-2S</keyword>
<keyword id="KW-0408">Iron</keyword>
<keyword id="KW-0411">Iron-sulfur</keyword>
<keyword id="KW-0479">Metal-binding</keyword>
<keyword id="KW-0560">Oxidoreductase</keyword>
<keyword id="KW-0574">Periplasm</keyword>
<keyword id="KW-0732">Signal</keyword>
<proteinExistence type="evidence at protein level"/>